<organism>
    <name type="scientific">Arabidopsis thaliana</name>
    <name type="common">Mouse-ear cress</name>
    <dbReference type="NCBI Taxonomy" id="3702"/>
    <lineage>
        <taxon>Eukaryota</taxon>
        <taxon>Viridiplantae</taxon>
        <taxon>Streptophyta</taxon>
        <taxon>Embryophyta</taxon>
        <taxon>Tracheophyta</taxon>
        <taxon>Spermatophyta</taxon>
        <taxon>Magnoliopsida</taxon>
        <taxon>eudicotyledons</taxon>
        <taxon>Gunneridae</taxon>
        <taxon>Pentapetalae</taxon>
        <taxon>rosids</taxon>
        <taxon>malvids</taxon>
        <taxon>Brassicales</taxon>
        <taxon>Brassicaceae</taxon>
        <taxon>Camelineae</taxon>
        <taxon>Arabidopsis</taxon>
    </lineage>
</organism>
<gene>
    <name evidence="4" type="ordered locus">At5g57100</name>
    <name evidence="5" type="ORF">MUL3.4</name>
</gene>
<dbReference type="EMBL" id="AB023042">
    <property type="protein sequence ID" value="BAA97360.1"/>
    <property type="molecule type" value="Genomic_DNA"/>
</dbReference>
<dbReference type="EMBL" id="CP002688">
    <property type="protein sequence ID" value="AED96846.1"/>
    <property type="molecule type" value="Genomic_DNA"/>
</dbReference>
<dbReference type="EMBL" id="BT003153">
    <property type="protein sequence ID" value="AAO24585.1"/>
    <property type="molecule type" value="mRNA"/>
</dbReference>
<dbReference type="EMBL" id="AK228116">
    <property type="protein sequence ID" value="BAF00074.1"/>
    <property type="molecule type" value="mRNA"/>
</dbReference>
<dbReference type="EMBL" id="AY085537">
    <property type="protein sequence ID" value="AAM62761.1"/>
    <property type="status" value="ALT_INIT"/>
    <property type="molecule type" value="mRNA"/>
</dbReference>
<dbReference type="RefSeq" id="NP_200520.1">
    <property type="nucleotide sequence ID" value="NM_125092.4"/>
</dbReference>
<dbReference type="SMR" id="Q9LU76"/>
<dbReference type="FunCoup" id="Q9LU76">
    <property type="interactions" value="42"/>
</dbReference>
<dbReference type="IntAct" id="Q9LU76">
    <property type="interactions" value="15"/>
</dbReference>
<dbReference type="GlyGen" id="Q9LU76">
    <property type="glycosylation" value="2 sites"/>
</dbReference>
<dbReference type="iPTMnet" id="Q9LU76"/>
<dbReference type="PaxDb" id="3702-AT5G57100.1"/>
<dbReference type="EnsemblPlants" id="AT5G57100.1">
    <property type="protein sequence ID" value="AT5G57100.1"/>
    <property type="gene ID" value="AT5G57100"/>
</dbReference>
<dbReference type="GeneID" id="835814"/>
<dbReference type="Gramene" id="AT5G57100.1">
    <property type="protein sequence ID" value="AT5G57100.1"/>
    <property type="gene ID" value="AT5G57100"/>
</dbReference>
<dbReference type="KEGG" id="ath:AT5G57100"/>
<dbReference type="Araport" id="AT5G57100"/>
<dbReference type="TAIR" id="AT5G57100"/>
<dbReference type="eggNOG" id="KOG1441">
    <property type="taxonomic scope" value="Eukaryota"/>
</dbReference>
<dbReference type="HOGENOM" id="CLU_048347_1_1_1"/>
<dbReference type="InParanoid" id="Q9LU76"/>
<dbReference type="OMA" id="IHYICSW"/>
<dbReference type="OrthoDB" id="5547497at2759"/>
<dbReference type="PhylomeDB" id="Q9LU76"/>
<dbReference type="PRO" id="PR:Q9LU76"/>
<dbReference type="Proteomes" id="UP000006548">
    <property type="component" value="Chromosome 5"/>
</dbReference>
<dbReference type="ExpressionAtlas" id="Q9LU76">
    <property type="expression patterns" value="baseline and differential"/>
</dbReference>
<dbReference type="GO" id="GO:0016020">
    <property type="term" value="C:membrane"/>
    <property type="evidence" value="ECO:0007669"/>
    <property type="project" value="UniProtKB-SubCell"/>
</dbReference>
<dbReference type="InterPro" id="IPR004853">
    <property type="entry name" value="Sugar_P_trans_dom"/>
</dbReference>
<dbReference type="InterPro" id="IPR050186">
    <property type="entry name" value="TPT_transporter"/>
</dbReference>
<dbReference type="PANTHER" id="PTHR11132">
    <property type="entry name" value="SOLUTE CARRIER FAMILY 35"/>
    <property type="match status" value="1"/>
</dbReference>
<dbReference type="Pfam" id="PF03151">
    <property type="entry name" value="TPT"/>
    <property type="match status" value="1"/>
</dbReference>
<proteinExistence type="evidence at transcript level"/>
<evidence type="ECO:0000255" key="1"/>
<evidence type="ECO:0000256" key="2">
    <source>
        <dbReference type="SAM" id="MobiDB-lite"/>
    </source>
</evidence>
<evidence type="ECO:0000305" key="3"/>
<evidence type="ECO:0000312" key="4">
    <source>
        <dbReference type="Araport" id="AT5G57100"/>
    </source>
</evidence>
<evidence type="ECO:0000312" key="5">
    <source>
        <dbReference type="EMBL" id="BAA97360.1"/>
    </source>
</evidence>
<keyword id="KW-0472">Membrane</keyword>
<keyword id="KW-1185">Reference proteome</keyword>
<keyword id="KW-0762">Sugar transport</keyword>
<keyword id="KW-0812">Transmembrane</keyword>
<keyword id="KW-1133">Transmembrane helix</keyword>
<keyword id="KW-0813">Transport</keyword>
<protein>
    <recommendedName>
        <fullName evidence="3">Nucleotide-sugar uncharacterized transporter 1</fullName>
    </recommendedName>
</protein>
<feature type="chain" id="PRO_0000439527" description="Nucleotide-sugar uncharacterized transporter 1">
    <location>
        <begin position="1"/>
        <end position="390"/>
    </location>
</feature>
<feature type="transmembrane region" description="Helical" evidence="1">
    <location>
        <begin position="61"/>
        <end position="81"/>
    </location>
</feature>
<feature type="transmembrane region" description="Helical" evidence="1">
    <location>
        <begin position="89"/>
        <end position="109"/>
    </location>
</feature>
<feature type="transmembrane region" description="Helical" evidence="1">
    <location>
        <begin position="128"/>
        <end position="148"/>
    </location>
</feature>
<feature type="transmembrane region" description="Helical" evidence="1">
    <location>
        <begin position="155"/>
        <end position="175"/>
    </location>
</feature>
<feature type="transmembrane region" description="Helical" evidence="1">
    <location>
        <begin position="182"/>
        <end position="201"/>
    </location>
</feature>
<feature type="transmembrane region" description="Helical" evidence="1">
    <location>
        <begin position="206"/>
        <end position="228"/>
    </location>
</feature>
<feature type="transmembrane region" description="Helical" evidence="1">
    <location>
        <begin position="249"/>
        <end position="269"/>
    </location>
</feature>
<feature type="transmembrane region" description="Helical" evidence="1">
    <location>
        <begin position="278"/>
        <end position="298"/>
    </location>
</feature>
<feature type="transmembrane region" description="Helical" evidence="1">
    <location>
        <begin position="306"/>
        <end position="326"/>
    </location>
</feature>
<feature type="transmembrane region" description="Helical" evidence="1">
    <location>
        <begin position="329"/>
        <end position="349"/>
    </location>
</feature>
<feature type="region of interest" description="Disordered" evidence="2">
    <location>
        <begin position="356"/>
        <end position="390"/>
    </location>
</feature>
<feature type="compositionally biased region" description="Low complexity" evidence="2">
    <location>
        <begin position="356"/>
        <end position="365"/>
    </location>
</feature>
<feature type="compositionally biased region" description="Basic and acidic residues" evidence="2">
    <location>
        <begin position="366"/>
        <end position="382"/>
    </location>
</feature>
<feature type="sequence conflict" description="In Ref. 3; AAO24585 and 4; BAF00074." evidence="3" ref="3 4">
    <original>L</original>
    <variation>F</variation>
    <location>
        <position position="117"/>
    </location>
</feature>
<reference key="1">
    <citation type="journal article" date="2000" name="DNA Res.">
        <title>Structural analysis of Arabidopsis thaliana chromosome 5. X. Sequence features of the regions of 3,076,755 bp covered by sixty P1 and TAC clones.</title>
        <authorList>
            <person name="Sato S."/>
            <person name="Nakamura Y."/>
            <person name="Kaneko T."/>
            <person name="Katoh T."/>
            <person name="Asamizu E."/>
            <person name="Kotani H."/>
            <person name="Tabata S."/>
        </authorList>
    </citation>
    <scope>NUCLEOTIDE SEQUENCE [LARGE SCALE GENOMIC DNA]</scope>
    <source>
        <strain>cv. Columbia</strain>
    </source>
</reference>
<reference key="2">
    <citation type="journal article" date="2017" name="Plant J.">
        <title>Araport11: a complete reannotation of the Arabidopsis thaliana reference genome.</title>
        <authorList>
            <person name="Cheng C.Y."/>
            <person name="Krishnakumar V."/>
            <person name="Chan A.P."/>
            <person name="Thibaud-Nissen F."/>
            <person name="Schobel S."/>
            <person name="Town C.D."/>
        </authorList>
    </citation>
    <scope>GENOME REANNOTATION</scope>
    <source>
        <strain>cv. Columbia</strain>
    </source>
</reference>
<reference key="3">
    <citation type="journal article" date="2003" name="Science">
        <title>Empirical analysis of transcriptional activity in the Arabidopsis genome.</title>
        <authorList>
            <person name="Yamada K."/>
            <person name="Lim J."/>
            <person name="Dale J.M."/>
            <person name="Chen H."/>
            <person name="Shinn P."/>
            <person name="Palm C.J."/>
            <person name="Southwick A.M."/>
            <person name="Wu H.C."/>
            <person name="Kim C.J."/>
            <person name="Nguyen M."/>
            <person name="Pham P.K."/>
            <person name="Cheuk R.F."/>
            <person name="Karlin-Newmann G."/>
            <person name="Liu S.X."/>
            <person name="Lam B."/>
            <person name="Sakano H."/>
            <person name="Wu T."/>
            <person name="Yu G."/>
            <person name="Miranda M."/>
            <person name="Quach H.L."/>
            <person name="Tripp M."/>
            <person name="Chang C.H."/>
            <person name="Lee J.M."/>
            <person name="Toriumi M.J."/>
            <person name="Chan M.M."/>
            <person name="Tang C.C."/>
            <person name="Onodera C.S."/>
            <person name="Deng J.M."/>
            <person name="Akiyama K."/>
            <person name="Ansari Y."/>
            <person name="Arakawa T."/>
            <person name="Banh J."/>
            <person name="Banno F."/>
            <person name="Bowser L."/>
            <person name="Brooks S.Y."/>
            <person name="Carninci P."/>
            <person name="Chao Q."/>
            <person name="Choy N."/>
            <person name="Enju A."/>
            <person name="Goldsmith A.D."/>
            <person name="Gurjal M."/>
            <person name="Hansen N.F."/>
            <person name="Hayashizaki Y."/>
            <person name="Johnson-Hopson C."/>
            <person name="Hsuan V.W."/>
            <person name="Iida K."/>
            <person name="Karnes M."/>
            <person name="Khan S."/>
            <person name="Koesema E."/>
            <person name="Ishida J."/>
            <person name="Jiang P.X."/>
            <person name="Jones T."/>
            <person name="Kawai J."/>
            <person name="Kamiya A."/>
            <person name="Meyers C."/>
            <person name="Nakajima M."/>
            <person name="Narusaka M."/>
            <person name="Seki M."/>
            <person name="Sakurai T."/>
            <person name="Satou M."/>
            <person name="Tamse R."/>
            <person name="Vaysberg M."/>
            <person name="Wallender E.K."/>
            <person name="Wong C."/>
            <person name="Yamamura Y."/>
            <person name="Yuan S."/>
            <person name="Shinozaki K."/>
            <person name="Davis R.W."/>
            <person name="Theologis A."/>
            <person name="Ecker J.R."/>
        </authorList>
    </citation>
    <scope>NUCLEOTIDE SEQUENCE [LARGE SCALE MRNA]</scope>
    <source>
        <strain>cv. Columbia</strain>
    </source>
</reference>
<reference key="4">
    <citation type="submission" date="2006-07" db="EMBL/GenBank/DDBJ databases">
        <title>Large-scale analysis of RIKEN Arabidopsis full-length (RAFL) cDNAs.</title>
        <authorList>
            <person name="Totoki Y."/>
            <person name="Seki M."/>
            <person name="Ishida J."/>
            <person name="Nakajima M."/>
            <person name="Enju A."/>
            <person name="Kamiya A."/>
            <person name="Narusaka M."/>
            <person name="Shin-i T."/>
            <person name="Nakagawa M."/>
            <person name="Sakamoto N."/>
            <person name="Oishi K."/>
            <person name="Kohara Y."/>
            <person name="Kobayashi M."/>
            <person name="Toyoda A."/>
            <person name="Sakaki Y."/>
            <person name="Sakurai T."/>
            <person name="Iida K."/>
            <person name="Akiyama K."/>
            <person name="Satou M."/>
            <person name="Toyoda T."/>
            <person name="Konagaya A."/>
            <person name="Carninci P."/>
            <person name="Kawai J."/>
            <person name="Hayashizaki Y."/>
            <person name="Shinozaki K."/>
        </authorList>
    </citation>
    <scope>NUCLEOTIDE SEQUENCE [LARGE SCALE MRNA]</scope>
    <source>
        <strain>cv. Columbia</strain>
    </source>
</reference>
<reference key="5">
    <citation type="submission" date="2002-03" db="EMBL/GenBank/DDBJ databases">
        <title>Full-length cDNA from Arabidopsis thaliana.</title>
        <authorList>
            <person name="Brover V.V."/>
            <person name="Troukhan M.E."/>
            <person name="Alexandrov N.A."/>
            <person name="Lu Y.-P."/>
            <person name="Flavell R.B."/>
            <person name="Feldmann K.A."/>
        </authorList>
    </citation>
    <scope>NUCLEOTIDE SEQUENCE [LARGE SCALE MRNA]</scope>
</reference>
<reference key="6">
    <citation type="journal article" date="2014" name="Proc. Natl. Acad. Sci. U.S.A.">
        <title>The Golgi localized bifunctional UDP-rhamnose/UDP-galactose transporter family of Arabidopsis.</title>
        <authorList>
            <person name="Rautengarten C."/>
            <person name="Ebert B."/>
            <person name="Moreno I."/>
            <person name="Temple H."/>
            <person name="Herter T."/>
            <person name="Link B."/>
            <person name="Donas-Cofre D."/>
            <person name="Moreno A."/>
            <person name="Saez-Aguayo S."/>
            <person name="Blanco F."/>
            <person name="Mortimer J.C."/>
            <person name="Schultink A."/>
            <person name="Reiter W.D."/>
            <person name="Dupree P."/>
            <person name="Pauly M."/>
            <person name="Heazlewood J.L."/>
            <person name="Scheller H.V."/>
            <person name="Orellana A."/>
        </authorList>
    </citation>
    <scope>GENE FAMILY</scope>
</reference>
<reference key="7">
    <citation type="journal article" date="2015" name="Plant Cell">
        <title>Identification and characterization of a Golgi-localized UDP-xylose transporter family from Arabidopsis.</title>
        <authorList>
            <person name="Ebert B."/>
            <person name="Rautengarten C."/>
            <person name="Guo X."/>
            <person name="Xiong G."/>
            <person name="Stonebloom S."/>
            <person name="Smith-Moritz A.M."/>
            <person name="Herter T."/>
            <person name="Chan L.J."/>
            <person name="Adams P.D."/>
            <person name="Petzold C.J."/>
            <person name="Pauly M."/>
            <person name="Willats W.G."/>
            <person name="Heazlewood J.L."/>
            <person name="Scheller H.V."/>
        </authorList>
    </citation>
    <scope>GENE FAMILY</scope>
</reference>
<comment type="subcellular location">
    <subcellularLocation>
        <location evidence="1">Membrane</location>
        <topology evidence="1">Multi-pass membrane protein</topology>
    </subcellularLocation>
</comment>
<comment type="similarity">
    <text evidence="3">Belongs to the TPT transporter family. TPT (TC 2.A.7.9) subfamily.</text>
</comment>
<comment type="sequence caution" evidence="3">
    <conflict type="erroneous initiation">
        <sequence resource="EMBL-CDS" id="AAM62761"/>
    </conflict>
    <text>Truncated N-terminus.</text>
</comment>
<accession>Q9LU76</accession>
<accession>Q84WJ4</accession>
<accession>Q8LEA4</accession>
<sequence>MLLTPKMFSSWLRQDVKKILKRKDSDAGERGKALEDLRASLFNRFRSPETPKRQQQQQHRICGPTVALTFNFVVAISIIFMNKWVLKNIGFEFPVFLTFIHYIVAYLLMALLKSFSLLPASPPSTKSSLLPLYTLGIVMSLSTGLANVSLKYNSVGFYQMAKIAVTPSIVFAEFLWYRKRVSFMKVVSLTVVSVGVAVATVTDLQFSLFGACVAFAWIIPSATNKILWSNMQQRENWTALALMWKTTPITLLFLVSMIPFLDPPGALSFNWSLTNTSAILVSALLGFFLQWSGALALGATSAITHVVLGQFKTCVLLLGNYYIFGSNSGFISVGGAFVAIMGTSLYTYLNTRGQSLKTSSSSSALSEKKSRFSDLKDDDKNLEPYGSEAV</sequence>
<name>NSTU1_ARATH</name>